<organism>
    <name type="scientific">Streptomyces tokunonensis</name>
    <dbReference type="NCBI Taxonomy" id="2689386"/>
    <lineage>
        <taxon>Bacteria</taxon>
        <taxon>Bacillati</taxon>
        <taxon>Actinomycetota</taxon>
        <taxon>Actinomycetes</taxon>
        <taxon>Kitasatosporales</taxon>
        <taxon>Streptomycetaceae</taxon>
        <taxon>Streptomyces</taxon>
    </lineage>
</organism>
<name>TOKK_STREV</name>
<proteinExistence type="evidence at protein level"/>
<keyword id="KW-0002">3D-structure</keyword>
<keyword id="KW-0004">4Fe-4S</keyword>
<keyword id="KW-0045">Antibiotic biosynthesis</keyword>
<keyword id="KW-0846">Cobalamin</keyword>
<keyword id="KW-0170">Cobalt</keyword>
<keyword id="KW-0408">Iron</keyword>
<keyword id="KW-0411">Iron-sulfur</keyword>
<keyword id="KW-0479">Metal-binding</keyword>
<keyword id="KW-0489">Methyltransferase</keyword>
<keyword id="KW-0949">S-adenosyl-L-methionine</keyword>
<keyword id="KW-0808">Transferase</keyword>
<protein>
    <recommendedName>
        <fullName evidence="9">Cobalamin-dependent radical SAM methyltransferase TokK</fullName>
        <ecNumber evidence="3 4 5">2.1.1.-</ecNumber>
    </recommendedName>
    <alternativeName>
        <fullName evidence="8">B12-dependent SAM enzyme TokK</fullName>
    </alternativeName>
</protein>
<sequence length="681" mass="77368">MSAELASRGRKVYFVGLNEYPFLPLVAGLLRTYAEQDERIAAAYDFQEPVFLVAPVQEMADGIVEPDVLALSCYVWNFRRQMKVAKLVKERYPNVLVVAGGPHVPDRPGNFFEKHPYVDVLAHGEGEVAFRELLATRLSDHPDYTAVPGVSVRRGTEAVVGPKAKRLPRLIDTPSPYLLGVMDGAVATCRERGLRFYALWETNRGCPYSCSFCDWGSATMSTLRKFEDERLQDEIEWFARHDVEDLFICDANFGIMPRDLEIAHALAEARGELGAPRQVRVNFAKNSNDRVFDISKTWHDADLLMGTTLSMQSTDMDVLEAIDRKNIGLDNYRKLQQRYAAENIHTYTELILGLPMETARSFRDGIGSLLEAGNHEDLRVYELGILPNAPLNTPEKIEQYGLRTVPKRMYVERPGTPDDEAETFEMVMETNAMPRDAWVESFSFIQAVQFLHNGCYTRYLSIFLRQEHGIGYTRFYEGLQDYFTGRPDTVLGALYLRMRSLYHDYIDMPALPLANLVASQPDMAADLAPYGRRRGWTIDNWGWLRIATDFDRFHTELREYLATLGLDPAGDARLEDVLRFQQDVMLRPDYSPELGKSAEYAHDWPGYFAGGLLRPRRVRVAYGDQSFGANGRYRPVPGDLKAFTMAAIGTSYPVSRMGHFCHRFESAEVTSLAEPVVSEQW</sequence>
<accession>A0A6B9HEI0</accession>
<reference evidence="11" key="1">
    <citation type="journal article" date="2019" name="Chem. Commun. (Camb.)">
        <title>Methylations in complex carbapenem biosynthesis are catalyzed by a single cobalamin-dependent radical S-adenosylmethionine enzyme.</title>
        <authorList>
            <person name="Sinner E.K."/>
            <person name="Lichstrahl M.S."/>
            <person name="Li R."/>
            <person name="Marous D.R."/>
            <person name="Townsend C.A."/>
        </authorList>
    </citation>
    <scope>NUCLEOTIDE SEQUENCE [GENOMIC DNA]</scope>
    <scope>FUNCTION</scope>
    <scope>CATALYTIC ACTIVITY</scope>
    <source>
        <strain>ATCC 31569 / FERM 4843 / PA-31088</strain>
    </source>
</reference>
<reference key="2">
    <citation type="journal article" date="2022" name="RSC Chem. Biol.">
        <title>Stereochemical course of cobalamin-dependent radical SAM methylation by TokK and ThnK.</title>
        <authorList>
            <person name="Lichstrahl M.S."/>
            <person name="Townsend C.A."/>
            <person name="Sinner E.K."/>
        </authorList>
    </citation>
    <scope>FUNCTION</scope>
    <scope>CATALYTIC ACTIVITY</scope>
    <scope>REACTION MECHANISM FOR THE FIRST METHYLATION</scope>
</reference>
<reference key="3">
    <citation type="journal article" date="2023" name="Chemistry">
        <title>Sequential C-H Methylation Catalyzed by the B12-Dependent SAM Enzyme TokK: Comprehensive Theoretical Study of Selectivities.</title>
        <authorList>
            <person name="Deng W.H."/>
            <person name="Liao R.Z."/>
        </authorList>
    </citation>
    <scope>FUNCTION</scope>
    <scope>QUANTUM CHEMICAL STUDY OF THE REACTION MECHANISM</scope>
</reference>
<reference evidence="12 13" key="4">
    <citation type="journal article" date="2022" name="Nature">
        <title>Structure of a B12-dependent radical SAM enzyme in carbapenem biosynthesis.</title>
        <authorList>
            <person name="Knox H.L."/>
            <person name="Sinner E.K."/>
            <person name="Townsend C.A."/>
            <person name="Boal A.K."/>
            <person name="Booker S.J."/>
        </authorList>
    </citation>
    <scope>X-RAY CRYSTALLOGRAPHY (1.79 ANGSTROMS) IN COMPLEXES WITH [4FE-4S] CLUSTER; COB(II)ALAMIN; CARBAPENAM SUBSTRATE AND 5'-DEOXYADENOSINE</scope>
    <scope>FUNCTION</scope>
    <scope>CATALYTIC ACTIVITY</scope>
    <scope>COFACTOR</scope>
    <scope>DOMAIN</scope>
    <scope>MUTAGENESIS OF 19-GLU-TYR-20; TRP-76; TRP-215; ARG-280 AND LEU-383</scope>
</reference>
<evidence type="ECO:0000255" key="1">
    <source>
        <dbReference type="PROSITE-ProRule" id="PRU00666"/>
    </source>
</evidence>
<evidence type="ECO:0000255" key="2">
    <source>
        <dbReference type="PROSITE-ProRule" id="PRU01266"/>
    </source>
</evidence>
<evidence type="ECO:0000269" key="3">
    <source>
    </source>
</evidence>
<evidence type="ECO:0000269" key="4">
    <source>
    </source>
</evidence>
<evidence type="ECO:0000269" key="5">
    <source>
    </source>
</evidence>
<evidence type="ECO:0000269" key="6">
    <source>
    </source>
</evidence>
<evidence type="ECO:0000303" key="7">
    <source>
    </source>
</evidence>
<evidence type="ECO:0000303" key="8">
    <source>
    </source>
</evidence>
<evidence type="ECO:0000305" key="9"/>
<evidence type="ECO:0000305" key="10">
    <source>
    </source>
</evidence>
<evidence type="ECO:0000312" key="11">
    <source>
        <dbReference type="EMBL" id="QGY73527.1"/>
    </source>
</evidence>
<evidence type="ECO:0007744" key="12">
    <source>
        <dbReference type="PDB" id="7KDX"/>
    </source>
</evidence>
<evidence type="ECO:0007744" key="13">
    <source>
        <dbReference type="PDB" id="7KDY"/>
    </source>
</evidence>
<evidence type="ECO:0007829" key="14">
    <source>
        <dbReference type="PDB" id="7KDX"/>
    </source>
</evidence>
<evidence type="ECO:0007829" key="15">
    <source>
        <dbReference type="PDB" id="7KDY"/>
    </source>
</evidence>
<comment type="function">
    <text evidence="3 4 5 6">Methyltransferase involved in the biosynthesis of the beta-lactam carbapenem antibiotic asparenomycin (PubMed:31774078). Catalyzes three consecutive S-adenosyl-L-methionine-dependent methylations to build out the C6-isopropyl side chain in a stereocontrolled manner (PubMed:31774078, PubMed:35110734, PubMed:36042702, PubMed:36321632).</text>
</comment>
<comment type="cofactor">
    <cofactor evidence="4">
        <name>[4Fe-4S] cluster</name>
        <dbReference type="ChEBI" id="CHEBI:49883"/>
    </cofactor>
    <text evidence="4">Binds 1 [4Fe-4S] cluster. The cluster is coordinated with 3 cysteines and an exchangeable S-adenosyl-L-methionine.</text>
</comment>
<comment type="cofactor">
    <cofactor evidence="4">
        <name>cob(II)alamin</name>
        <dbReference type="ChEBI" id="CHEBI:16304"/>
    </cofactor>
</comment>
<comment type="pathway">
    <text evidence="10">Antibiotic biosynthesis.</text>
</comment>
<comment type="domain">
    <text evidence="4">The cobalamin- and substrate-binding sites influence overall activity and the relative rates of each methylation step.</text>
</comment>
<comment type="similarity">
    <text evidence="9">Belongs to the methyltransferase superfamily.</text>
</comment>
<gene>
    <name evidence="7" type="primary">tokK</name>
</gene>
<feature type="chain" id="PRO_0000461605" description="Cobalamin-dependent radical SAM methyltransferase TokK">
    <location>
        <begin position="1"/>
        <end position="681"/>
    </location>
</feature>
<feature type="domain" description="B12-binding" evidence="1">
    <location>
        <begin position="1"/>
        <end position="144"/>
    </location>
</feature>
<feature type="domain" description="Radical SAM core" evidence="2">
    <location>
        <begin position="192"/>
        <end position="417"/>
    </location>
</feature>
<feature type="binding site" evidence="4 13">
    <location>
        <position position="18"/>
    </location>
    <ligand>
        <name>cob(II)alamin</name>
        <dbReference type="ChEBI" id="CHEBI:16304"/>
    </ligand>
</feature>
<feature type="binding site" evidence="4 12 13">
    <location>
        <position position="72"/>
    </location>
    <ligand>
        <name>cob(II)alamin</name>
        <dbReference type="ChEBI" id="CHEBI:16304"/>
    </ligand>
</feature>
<feature type="binding site" evidence="4 12 13">
    <location>
        <position position="74"/>
    </location>
    <ligand>
        <name>cob(II)alamin</name>
        <dbReference type="ChEBI" id="CHEBI:16304"/>
    </ligand>
</feature>
<feature type="binding site" evidence="4 12 13">
    <location>
        <position position="75"/>
    </location>
    <ligand>
        <name>cob(II)alamin</name>
        <dbReference type="ChEBI" id="CHEBI:16304"/>
    </ligand>
</feature>
<feature type="binding site" evidence="4 12 13">
    <location>
        <position position="103"/>
    </location>
    <ligand>
        <name>cob(II)alamin</name>
        <dbReference type="ChEBI" id="CHEBI:16304"/>
    </ligand>
</feature>
<feature type="binding site" evidence="4 12 13">
    <location>
        <position position="126"/>
    </location>
    <ligand>
        <name>cob(II)alamin</name>
        <dbReference type="ChEBI" id="CHEBI:16304"/>
    </ligand>
</feature>
<feature type="binding site" evidence="4 12 13">
    <location>
        <position position="127"/>
    </location>
    <ligand>
        <name>cob(II)alamin</name>
        <dbReference type="ChEBI" id="CHEBI:16304"/>
    </ligand>
</feature>
<feature type="binding site" evidence="4 12 13">
    <location>
        <position position="206"/>
    </location>
    <ligand>
        <name>[4Fe-4S] cluster</name>
        <dbReference type="ChEBI" id="CHEBI:49883"/>
        <note>4Fe-4S-S-AdoMet</note>
    </ligand>
</feature>
<feature type="binding site" evidence="4 12 13">
    <location>
        <position position="210"/>
    </location>
    <ligand>
        <name>[4Fe-4S] cluster</name>
        <dbReference type="ChEBI" id="CHEBI:49883"/>
        <note>4Fe-4S-S-AdoMet</note>
    </ligand>
</feature>
<feature type="binding site" evidence="4 12 13">
    <location>
        <position position="212"/>
    </location>
    <ligand>
        <name>5'-deoxyadenosine</name>
        <dbReference type="ChEBI" id="CHEBI:17319"/>
    </ligand>
</feature>
<feature type="binding site" evidence="4 12 13">
    <location>
        <position position="213"/>
    </location>
    <ligand>
        <name>[4Fe-4S] cluster</name>
        <dbReference type="ChEBI" id="CHEBI:49883"/>
        <note>4Fe-4S-S-AdoMet</note>
    </ligand>
</feature>
<feature type="binding site" evidence="4 12 13">
    <location>
        <position position="214"/>
    </location>
    <ligand>
        <name>cob(II)alamin</name>
        <dbReference type="ChEBI" id="CHEBI:16304"/>
    </ligand>
</feature>
<feature type="binding site" evidence="4 12 13">
    <location>
        <position position="249"/>
    </location>
    <ligand>
        <name>cob(II)alamin</name>
        <dbReference type="ChEBI" id="CHEBI:16304"/>
    </ligand>
</feature>
<feature type="binding site" evidence="4 12 13">
    <location>
        <position position="312"/>
    </location>
    <ligand>
        <name>5'-deoxyadenosine</name>
        <dbReference type="ChEBI" id="CHEBI:17319"/>
    </ligand>
</feature>
<feature type="binding site" evidence="4 12 13">
    <location>
        <position position="349"/>
    </location>
    <ligand>
        <name>5'-deoxyadenosine</name>
        <dbReference type="ChEBI" id="CHEBI:17319"/>
    </ligand>
</feature>
<feature type="binding site" evidence="4 12 13">
    <location>
        <position position="384"/>
    </location>
    <ligand>
        <name>5'-deoxyadenosine</name>
        <dbReference type="ChEBI" id="CHEBI:17319"/>
    </ligand>
</feature>
<feature type="mutagenesis site" description="The rate constant for the first methylation is increased 1.4-fold, and the rate constants for the second and third methylations are decreased 1.4- and 3.4-fold, respectively." evidence="4">
    <original>EY</original>
    <variation>AV</variation>
    <location>
        <begin position="19"/>
        <end position="20"/>
    </location>
</feature>
<feature type="mutagenesis site" description="Slight increase in methylation steps." evidence="4">
    <original>W</original>
    <variation>A</variation>
    <variation>F</variation>
    <variation>H</variation>
    <location>
        <position position="76"/>
    </location>
</feature>
<feature type="mutagenesis site" description="50-fold decrease for all three methylation steps." evidence="4">
    <original>W</original>
    <variation>K</variation>
    <location>
        <position position="76"/>
    </location>
</feature>
<feature type="mutagenesis site" description="Markedly slows substrate methylation." evidence="4">
    <original>W</original>
    <variation>F</variation>
    <variation>A</variation>
    <variation>Y</variation>
    <location>
        <position position="215"/>
    </location>
</feature>
<feature type="mutagenesis site" description="Near complete loss of activity." evidence="4">
    <original>R</original>
    <variation>Q</variation>
    <location>
        <position position="280"/>
    </location>
</feature>
<feature type="mutagenesis site" description="Reduces the rate constants for all three methyl transfers." evidence="4">
    <original>L</original>
    <variation>F</variation>
    <location>
        <position position="383"/>
    </location>
</feature>
<feature type="strand" evidence="14">
    <location>
        <begin position="10"/>
        <end position="20"/>
    </location>
</feature>
<feature type="helix" evidence="14">
    <location>
        <begin position="25"/>
        <end position="34"/>
    </location>
</feature>
<feature type="helix" evidence="14">
    <location>
        <begin position="38"/>
        <end position="43"/>
    </location>
</feature>
<feature type="strand" evidence="14">
    <location>
        <begin position="44"/>
        <end position="46"/>
    </location>
</feature>
<feature type="strand" evidence="14">
    <location>
        <begin position="50"/>
        <end position="52"/>
    </location>
</feature>
<feature type="helix" evidence="14">
    <location>
        <begin position="56"/>
        <end position="61"/>
    </location>
</feature>
<feature type="strand" evidence="14">
    <location>
        <begin position="65"/>
        <end position="72"/>
    </location>
</feature>
<feature type="turn" evidence="14">
    <location>
        <begin position="75"/>
        <end position="77"/>
    </location>
</feature>
<feature type="helix" evidence="14">
    <location>
        <begin position="78"/>
        <end position="91"/>
    </location>
</feature>
<feature type="strand" evidence="14">
    <location>
        <begin position="96"/>
        <end position="101"/>
    </location>
</feature>
<feature type="helix" evidence="14">
    <location>
        <begin position="111"/>
        <end position="114"/>
    </location>
</feature>
<feature type="strand" evidence="14">
    <location>
        <begin position="120"/>
        <end position="122"/>
    </location>
</feature>
<feature type="helix" evidence="14">
    <location>
        <begin position="127"/>
        <end position="138"/>
    </location>
</feature>
<feature type="strand" evidence="15">
    <location>
        <begin position="139"/>
        <end position="141"/>
    </location>
</feature>
<feature type="helix" evidence="15">
    <location>
        <begin position="144"/>
        <end position="146"/>
    </location>
</feature>
<feature type="strand" evidence="14">
    <location>
        <begin position="150"/>
        <end position="154"/>
    </location>
</feature>
<feature type="strand" evidence="14">
    <location>
        <begin position="157"/>
        <end position="160"/>
    </location>
</feature>
<feature type="strand" evidence="14">
    <location>
        <begin position="169"/>
        <end position="171"/>
    </location>
</feature>
<feature type="turn" evidence="14">
    <location>
        <begin position="176"/>
        <end position="182"/>
    </location>
</feature>
<feature type="helix" evidence="14">
    <location>
        <begin position="183"/>
        <end position="191"/>
    </location>
</feature>
<feature type="strand" evidence="14">
    <location>
        <begin position="197"/>
        <end position="200"/>
    </location>
</feature>
<feature type="strand" evidence="14">
    <location>
        <begin position="202"/>
        <end position="204"/>
    </location>
</feature>
<feature type="helix" evidence="14">
    <location>
        <begin position="215"/>
        <end position="217"/>
    </location>
</feature>
<feature type="strand" evidence="14">
    <location>
        <begin position="224"/>
        <end position="226"/>
    </location>
</feature>
<feature type="helix" evidence="14">
    <location>
        <begin position="228"/>
        <end position="240"/>
    </location>
</feature>
<feature type="strand" evidence="14">
    <location>
        <begin position="245"/>
        <end position="248"/>
    </location>
</feature>
<feature type="strand" evidence="14">
    <location>
        <begin position="251"/>
        <end position="253"/>
    </location>
</feature>
<feature type="helix" evidence="14">
    <location>
        <begin position="258"/>
        <end position="273"/>
    </location>
</feature>
<feature type="strand" evidence="14">
    <location>
        <begin position="278"/>
        <end position="280"/>
    </location>
</feature>
<feature type="helix" evidence="14">
    <location>
        <begin position="289"/>
        <end position="300"/>
    </location>
</feature>
<feature type="helix" evidence="14">
    <location>
        <begin position="316"/>
        <end position="321"/>
    </location>
</feature>
<feature type="helix" evidence="14">
    <location>
        <begin position="329"/>
        <end position="341"/>
    </location>
</feature>
<feature type="strand" evidence="14">
    <location>
        <begin position="346"/>
        <end position="352"/>
    </location>
</feature>
<feature type="helix" evidence="14">
    <location>
        <begin position="359"/>
        <end position="371"/>
    </location>
</feature>
<feature type="strand" evidence="14">
    <location>
        <begin position="378"/>
        <end position="382"/>
    </location>
</feature>
<feature type="helix" evidence="14">
    <location>
        <begin position="394"/>
        <end position="400"/>
    </location>
</feature>
<feature type="strand" evidence="14">
    <location>
        <begin position="403"/>
        <end position="410"/>
    </location>
</feature>
<feature type="helix" evidence="14">
    <location>
        <begin position="418"/>
        <end position="420"/>
    </location>
</feature>
<feature type="strand" evidence="14">
    <location>
        <begin position="423"/>
        <end position="429"/>
    </location>
</feature>
<feature type="strand" evidence="14">
    <location>
        <begin position="431"/>
        <end position="433"/>
    </location>
</feature>
<feature type="helix" evidence="14">
    <location>
        <begin position="435"/>
        <end position="451"/>
    </location>
</feature>
<feature type="turn" evidence="14">
    <location>
        <begin position="452"/>
        <end position="454"/>
    </location>
</feature>
<feature type="helix" evidence="14">
    <location>
        <begin position="458"/>
        <end position="468"/>
    </location>
</feature>
<feature type="helix" evidence="14">
    <location>
        <begin position="472"/>
        <end position="484"/>
    </location>
</feature>
<feature type="helix" evidence="14">
    <location>
        <begin position="490"/>
        <end position="507"/>
    </location>
</feature>
<feature type="strand" evidence="14">
    <location>
        <begin position="513"/>
        <end position="515"/>
    </location>
</feature>
<feature type="helix" evidence="14">
    <location>
        <begin position="516"/>
        <end position="519"/>
    </location>
</feature>
<feature type="helix" evidence="14">
    <location>
        <begin position="521"/>
        <end position="527"/>
    </location>
</feature>
<feature type="helix" evidence="14">
    <location>
        <begin position="528"/>
        <end position="530"/>
    </location>
</feature>
<feature type="helix" evidence="14">
    <location>
        <begin position="538"/>
        <end position="548"/>
    </location>
</feature>
<feature type="helix" evidence="14">
    <location>
        <begin position="550"/>
        <end position="563"/>
    </location>
</feature>
<feature type="helix" evidence="14">
    <location>
        <begin position="568"/>
        <end position="570"/>
    </location>
</feature>
<feature type="helix" evidence="14">
    <location>
        <begin position="572"/>
        <end position="583"/>
    </location>
</feature>
<feature type="turn" evidence="14">
    <location>
        <begin position="592"/>
        <end position="594"/>
    </location>
</feature>
<feature type="strand" evidence="14">
    <location>
        <begin position="596"/>
        <end position="602"/>
    </location>
</feature>
<feature type="helix" evidence="14">
    <location>
        <begin position="604"/>
        <end position="608"/>
    </location>
</feature>
<feature type="strand" evidence="14">
    <location>
        <begin position="618"/>
        <end position="622"/>
    </location>
</feature>
<feature type="helix" evidence="15">
    <location>
        <begin position="629"/>
        <end position="631"/>
    </location>
</feature>
<feature type="helix" evidence="14">
    <location>
        <begin position="640"/>
        <end position="648"/>
    </location>
</feature>
<feature type="turn" evidence="14">
    <location>
        <begin position="651"/>
        <end position="654"/>
    </location>
</feature>
<feature type="turn" evidence="14">
    <location>
        <begin position="664"/>
        <end position="666"/>
    </location>
</feature>
<feature type="strand" evidence="14">
    <location>
        <begin position="667"/>
        <end position="671"/>
    </location>
</feature>
<dbReference type="EC" id="2.1.1.-" evidence="3 4 5"/>
<dbReference type="EMBL" id="MN385145">
    <property type="protein sequence ID" value="QGY73527.1"/>
    <property type="molecule type" value="Genomic_DNA"/>
</dbReference>
<dbReference type="PDB" id="7KDX">
    <property type="method" value="X-ray"/>
    <property type="resolution" value="1.79 A"/>
    <property type="chains" value="A/B=1-681"/>
</dbReference>
<dbReference type="PDB" id="7KDY">
    <property type="method" value="X-ray"/>
    <property type="resolution" value="1.94 A"/>
    <property type="chains" value="A/B=1-681"/>
</dbReference>
<dbReference type="PDBsum" id="7KDX"/>
<dbReference type="PDBsum" id="7KDY"/>
<dbReference type="SMR" id="A0A6B9HEI0"/>
<dbReference type="GO" id="GO:0005829">
    <property type="term" value="C:cytosol"/>
    <property type="evidence" value="ECO:0007669"/>
    <property type="project" value="TreeGrafter"/>
</dbReference>
<dbReference type="GO" id="GO:0051539">
    <property type="term" value="F:4 iron, 4 sulfur cluster binding"/>
    <property type="evidence" value="ECO:0007669"/>
    <property type="project" value="UniProtKB-KW"/>
</dbReference>
<dbReference type="GO" id="GO:0031419">
    <property type="term" value="F:cobalamin binding"/>
    <property type="evidence" value="ECO:0007669"/>
    <property type="project" value="UniProtKB-KW"/>
</dbReference>
<dbReference type="GO" id="GO:0046872">
    <property type="term" value="F:metal ion binding"/>
    <property type="evidence" value="ECO:0007669"/>
    <property type="project" value="UniProtKB-KW"/>
</dbReference>
<dbReference type="GO" id="GO:0008168">
    <property type="term" value="F:methyltransferase activity"/>
    <property type="evidence" value="ECO:0007669"/>
    <property type="project" value="UniProtKB-KW"/>
</dbReference>
<dbReference type="GO" id="GO:0017000">
    <property type="term" value="P:antibiotic biosynthetic process"/>
    <property type="evidence" value="ECO:0007669"/>
    <property type="project" value="UniProtKB-KW"/>
</dbReference>
<dbReference type="GO" id="GO:0032259">
    <property type="term" value="P:methylation"/>
    <property type="evidence" value="ECO:0007669"/>
    <property type="project" value="UniProtKB-KW"/>
</dbReference>
<dbReference type="CDD" id="cd01335">
    <property type="entry name" value="Radical_SAM"/>
    <property type="match status" value="1"/>
</dbReference>
<dbReference type="CDD" id="cd02068">
    <property type="entry name" value="radical_SAM_B12_BD"/>
    <property type="match status" value="1"/>
</dbReference>
<dbReference type="Gene3D" id="3.40.50.280">
    <property type="entry name" value="Cobalamin-binding domain"/>
    <property type="match status" value="1"/>
</dbReference>
<dbReference type="Gene3D" id="3.80.30.20">
    <property type="entry name" value="tm_1862 like domain"/>
    <property type="match status" value="1"/>
</dbReference>
<dbReference type="InterPro" id="IPR006158">
    <property type="entry name" value="Cobalamin-bd"/>
</dbReference>
<dbReference type="InterPro" id="IPR036724">
    <property type="entry name" value="Cobalamin-bd_sf"/>
</dbReference>
<dbReference type="InterPro" id="IPR006638">
    <property type="entry name" value="Elp3/MiaA/NifB-like_rSAM"/>
</dbReference>
<dbReference type="InterPro" id="IPR007197">
    <property type="entry name" value="rSAM"/>
</dbReference>
<dbReference type="InterPro" id="IPR023404">
    <property type="entry name" value="rSAM_horseshoe"/>
</dbReference>
<dbReference type="InterPro" id="IPR051198">
    <property type="entry name" value="Tetrapyrrole_Bchl_Biosynth_MTs"/>
</dbReference>
<dbReference type="InterPro" id="IPR034514">
    <property type="entry name" value="ThnK-like"/>
</dbReference>
<dbReference type="PANTHER" id="PTHR43409">
    <property type="entry name" value="ANAEROBIC MAGNESIUM-PROTOPORPHYRIN IX MONOMETHYL ESTER CYCLASE-RELATED"/>
    <property type="match status" value="1"/>
</dbReference>
<dbReference type="PANTHER" id="PTHR43409:SF16">
    <property type="entry name" value="SLR0320 PROTEIN"/>
    <property type="match status" value="1"/>
</dbReference>
<dbReference type="Pfam" id="PF02310">
    <property type="entry name" value="B12-binding"/>
    <property type="match status" value="1"/>
</dbReference>
<dbReference type="SFLD" id="SFLDG01082">
    <property type="entry name" value="B12-binding_domain_containing"/>
    <property type="match status" value="1"/>
</dbReference>
<dbReference type="SFLD" id="SFLDF00435">
    <property type="entry name" value="carbapenem_intermediate_methyl"/>
    <property type="match status" value="1"/>
</dbReference>
<dbReference type="SMART" id="SM00729">
    <property type="entry name" value="Elp3"/>
    <property type="match status" value="1"/>
</dbReference>
<dbReference type="SUPFAM" id="SSF52242">
    <property type="entry name" value="Cobalamin (vitamin B12)-binding domain"/>
    <property type="match status" value="1"/>
</dbReference>
<dbReference type="SUPFAM" id="SSF102114">
    <property type="entry name" value="Radical SAM enzymes"/>
    <property type="match status" value="1"/>
</dbReference>
<dbReference type="PROSITE" id="PS51332">
    <property type="entry name" value="B12_BINDING"/>
    <property type="match status" value="1"/>
</dbReference>
<dbReference type="PROSITE" id="PS51918">
    <property type="entry name" value="RADICAL_SAM"/>
    <property type="match status" value="1"/>
</dbReference>